<reference key="1">
    <citation type="journal article" date="1990" name="J. Virol.">
        <title>Heterogeneity and evolution rates of delta virus RNA sequences.</title>
        <authorList>
            <person name="Imazeki F."/>
            <person name="Omata M."/>
            <person name="Ohto M."/>
        </authorList>
    </citation>
    <scope>NUCLEOTIDE SEQUENCE [GENOMIC RNA]</scope>
</reference>
<reference key="2">
    <citation type="journal article" date="2005" name="Acta Virol.">
        <title>Hepatitis D.</title>
        <authorList>
            <person name="Husa P."/>
            <person name="Linhartova A."/>
            <person name="Nemecek V."/>
            <person name="Husova L."/>
        </authorList>
    </citation>
    <scope>REVIEW</scope>
</reference>
<reference key="3">
    <citation type="journal article" date="2006" name="Curr. Top. Microbiol. Immunol.">
        <title>Post-translational modification of delta antigen of hepatitis D virus.</title>
        <authorList>
            <person name="Huang W.H."/>
            <person name="Chen C.W."/>
            <person name="Wu H.L."/>
            <person name="Chen P.J."/>
        </authorList>
    </citation>
    <scope>REVIEW</scope>
</reference>
<evidence type="ECO:0000250" key="1"/>
<evidence type="ECO:0000250" key="2">
    <source>
        <dbReference type="UniProtKB" id="P0C6L3"/>
    </source>
</evidence>
<evidence type="ECO:0000255" key="3"/>
<evidence type="ECO:0000255" key="4">
    <source>
        <dbReference type="PROSITE-ProRule" id="PRU01183"/>
    </source>
</evidence>
<evidence type="ECO:0000256" key="5">
    <source>
        <dbReference type="SAM" id="MobiDB-lite"/>
    </source>
</evidence>
<evidence type="ECO:0000305" key="6"/>
<dbReference type="EMBL" id="D90191">
    <property type="protein sequence ID" value="BAA14215.1"/>
    <property type="molecule type" value="Genomic_RNA"/>
</dbReference>
<dbReference type="SMR" id="P25882"/>
<dbReference type="Proteomes" id="UP000006827">
    <property type="component" value="Genome"/>
</dbReference>
<dbReference type="GO" id="GO:0043657">
    <property type="term" value="C:host cell"/>
    <property type="evidence" value="ECO:0007669"/>
    <property type="project" value="GOC"/>
</dbReference>
<dbReference type="GO" id="GO:0042025">
    <property type="term" value="C:host cell nucleus"/>
    <property type="evidence" value="ECO:0007669"/>
    <property type="project" value="UniProtKB-SubCell"/>
</dbReference>
<dbReference type="GO" id="GO:0044423">
    <property type="term" value="C:virion component"/>
    <property type="evidence" value="ECO:0007669"/>
    <property type="project" value="UniProtKB-KW"/>
</dbReference>
<dbReference type="GO" id="GO:0003723">
    <property type="term" value="F:RNA binding"/>
    <property type="evidence" value="ECO:0007669"/>
    <property type="project" value="UniProtKB-KW"/>
</dbReference>
<dbReference type="GO" id="GO:0046718">
    <property type="term" value="P:symbiont entry into host cell"/>
    <property type="evidence" value="ECO:0007669"/>
    <property type="project" value="UniProtKB-KW"/>
</dbReference>
<dbReference type="GO" id="GO:0075732">
    <property type="term" value="P:viral penetration into host nucleus"/>
    <property type="evidence" value="ECO:0007669"/>
    <property type="project" value="UniProtKB-KW"/>
</dbReference>
<dbReference type="Gene3D" id="4.10.220.40">
    <property type="entry name" value="Delta antigen, N-terminal"/>
    <property type="match status" value="1"/>
</dbReference>
<dbReference type="InterPro" id="IPR027403">
    <property type="entry name" value="Delta_antigen_N"/>
</dbReference>
<dbReference type="InterPro" id="IPR037517">
    <property type="entry name" value="HDAG_dom"/>
</dbReference>
<dbReference type="InterPro" id="IPR002506">
    <property type="entry name" value="HDV_ag"/>
</dbReference>
<dbReference type="Pfam" id="PF01517">
    <property type="entry name" value="HDV_ag"/>
    <property type="match status" value="1"/>
</dbReference>
<dbReference type="SUPFAM" id="SSF58108">
    <property type="entry name" value="Oligomerization domain of hepatitis delta antigen"/>
    <property type="match status" value="1"/>
</dbReference>
<dbReference type="PROSITE" id="PS51838">
    <property type="entry name" value="HDAG"/>
    <property type="match status" value="1"/>
</dbReference>
<proteinExistence type="inferred from homology"/>
<accession>P25882</accession>
<organism>
    <name type="scientific">Hepatitis delta virus genotype I (isolate Japanese M-2)</name>
    <name type="common">HDV</name>
    <dbReference type="NCBI Taxonomy" id="10425"/>
    <lineage>
        <taxon>Viruses</taxon>
        <taxon>Ribozyviria</taxon>
        <taxon>Kolmioviridae</taxon>
        <taxon>Deltavirus</taxon>
        <taxon>Hepatitis delta virus</taxon>
    </lineage>
</organism>
<protein>
    <recommendedName>
        <fullName>Small delta antigen</fullName>
        <shortName>S-HDAg</shortName>
    </recommendedName>
    <alternativeName>
        <fullName>p24</fullName>
    </alternativeName>
</protein>
<organismHost>
    <name type="scientific">Homo sapiens</name>
    <name type="common">Human</name>
    <dbReference type="NCBI Taxonomy" id="9606"/>
</organismHost>
<comment type="function">
    <text evidence="1">Promotes both transcription and replication of genomic RNA. Following virus entry into host cell, provides nuclear import of HDV RNPs thanks to its nuclear localization signal. May interact with host RNA polymerase II thereby changing its template requirement from DNA to RNA. RNA pol II complex would then acts as an RNA-directed RNA polymerase, and transcribe and replicate HDV genome (By similarity).</text>
</comment>
<comment type="subunit">
    <text evidence="1">Homodimer. Homooctamer. Interacts with host RNA polymerase II complex, and with host NPM1.</text>
</comment>
<comment type="subcellular location">
    <subcellularLocation>
        <location>Virion</location>
    </subcellularLocation>
    <subcellularLocation>
        <location evidence="1">Host nucleus</location>
    </subcellularLocation>
</comment>
<comment type="PTM">
    <text evidence="1">Phosphorylated at serines and threonines by host MAPK1/3, PKR, and CK2.</text>
</comment>
<comment type="PTM">
    <text evidence="1">Acetylation modulates nuclear localization. Neo-synthesized genomic RNA migrates from the nucleus to the cytoplasm, where they interact with S-HDAg, which once acetylated redirect both partners to the nucleus (By similarity).</text>
</comment>
<comment type="PTM">
    <text evidence="1">Methylation plays a role in viral genome replication.</text>
</comment>
<comment type="RNA editing">
    <location>
        <position position="196" evidence="1"/>
    </location>
    <text evidence="1">Partially edited. RNA editing at this position occurs on the antigenomic strand and consists of a conversion of A to G catalyzed by the cellular enzyme ADAR1. The unedited RNA version gives rise to the small delta antigen, which ends with a nonsense codon at position 196. In the edited version, this amber codon is modified to a tryptophan codon and gives rise to the large delta antigen protein (AC P0C6L8). S-HDAg suppresses editing of non-replicating antigenomic RNA, thereby regulating the extent of editing (By similarity).</text>
</comment>
<comment type="miscellaneous">
    <text>This strain belongs to the genotype I found in North America, Europe, Africa, East and West Asia and the South Pacific.</text>
</comment>
<comment type="similarity">
    <text evidence="6">Belongs to the hepatitis delta antigen family.</text>
</comment>
<feature type="chain" id="PRO_0000038139" description="Small delta antigen">
    <location>
        <begin position="1"/>
        <end position="195"/>
    </location>
</feature>
<feature type="domain" description="HDAg" evidence="4">
    <location>
        <begin position="20"/>
        <end position="195"/>
    </location>
</feature>
<feature type="region of interest" description="Dimerization" evidence="3">
    <location>
        <begin position="12"/>
        <end position="60"/>
    </location>
</feature>
<feature type="region of interest" description="Disordered" evidence="5">
    <location>
        <begin position="48"/>
        <end position="195"/>
    </location>
</feature>
<feature type="region of interest" description="RNA-binding" evidence="4">
    <location>
        <begin position="97"/>
        <end position="107"/>
    </location>
</feature>
<feature type="region of interest" description="RNAPII-binding" evidence="4">
    <location>
        <begin position="130"/>
        <end position="195"/>
    </location>
</feature>
<feature type="region of interest" description="RNA-binding" evidence="4">
    <location>
        <begin position="136"/>
        <end position="146"/>
    </location>
</feature>
<feature type="short sequence motif" description="Nuclear localization signal" evidence="2">
    <location>
        <begin position="66"/>
        <end position="75"/>
    </location>
</feature>
<feature type="compositionally biased region" description="Basic and acidic residues" evidence="5">
    <location>
        <begin position="94"/>
        <end position="112"/>
    </location>
</feature>
<feature type="compositionally biased region" description="Basic and acidic residues" evidence="5">
    <location>
        <begin position="129"/>
        <end position="144"/>
    </location>
</feature>
<feature type="compositionally biased region" description="Gly residues" evidence="5">
    <location>
        <begin position="158"/>
        <end position="167"/>
    </location>
</feature>
<feature type="modified residue" description="Phosphoserine; by host CK2" evidence="2">
    <location>
        <position position="2"/>
    </location>
</feature>
<feature type="modified residue" description="Omega-N-methylated arginine; by host PRMT1" evidence="2">
    <location>
        <position position="13"/>
    </location>
</feature>
<feature type="modified residue" description="N6-acetyllysine; by host" evidence="2">
    <location>
        <position position="72"/>
    </location>
</feature>
<feature type="modified residue" description="Phosphoserine; by host" evidence="2">
    <location>
        <position position="123"/>
    </location>
</feature>
<feature type="modified residue" description="Phosphoserine; by host MAPK1 and MAPK3" evidence="2">
    <location>
        <position position="177"/>
    </location>
</feature>
<feature type="modified residue" description="Phosphothreonine; by host" evidence="2">
    <location>
        <position position="182"/>
    </location>
</feature>
<keyword id="KW-0007">Acetylation</keyword>
<keyword id="KW-1048">Host nucleus</keyword>
<keyword id="KW-0945">Host-virus interaction</keyword>
<keyword id="KW-0488">Methylation</keyword>
<keyword id="KW-0597">Phosphoprotein</keyword>
<keyword id="KW-0691">RNA editing</keyword>
<keyword id="KW-0694">RNA-binding</keyword>
<keyword id="KW-1163">Viral penetration into host nucleus</keyword>
<keyword id="KW-0946">Virion</keyword>
<keyword id="KW-1160">Virus entry into host cell</keyword>
<sequence>MSRSESKGKRAGREQILEQWVDGRKKLEELERDLRKIKKKIKKLEEENPWLGNVKGILGKKDKDGEGAPPAKRARTDQMEVDTGPRKRPLRGGFSDKERQDHRRRKALENKKKQLSAGGKNLSKEEEEELKRLTEEDERRERRVAGPSVGGVNPLEGGPRGAPGGGFVPNMQGVPESPFTRTGEGLDVTGNLGFP</sequence>
<name>SHDAG_HDVM2</name>